<name>M212A_XENLA</name>
<accession>Q9I9K2</accession>
<accession>O73740</accession>
<protein>
    <recommendedName>
        <fullName>Protein mab-21-like 2-A</fullName>
    </recommendedName>
    <alternativeName>
        <fullName>XMab21l2</fullName>
        <shortName>Xmab-21</shortName>
    </alternativeName>
</protein>
<dbReference type="EMBL" id="AF240183">
    <property type="protein sequence ID" value="AAF67175.1"/>
    <property type="molecule type" value="Genomic_DNA"/>
</dbReference>
<dbReference type="EMBL" id="AF040992">
    <property type="protein sequence ID" value="AAC15657.1"/>
    <property type="molecule type" value="mRNA"/>
</dbReference>
<dbReference type="EMBL" id="BC074421">
    <property type="protein sequence ID" value="AAH74421.1"/>
    <property type="molecule type" value="mRNA"/>
</dbReference>
<dbReference type="RefSeq" id="NP_001083740.1">
    <property type="nucleotide sequence ID" value="NM_001090271.1"/>
</dbReference>
<dbReference type="SMR" id="Q9I9K2"/>
<dbReference type="DNASU" id="399091"/>
<dbReference type="AGR" id="Xenbase:XB-GENE-983452"/>
<dbReference type="Xenbase" id="XB-GENE-983452">
    <property type="gene designation" value="mab21l2.L"/>
</dbReference>
<dbReference type="OMA" id="WDESCIA"/>
<dbReference type="OrthoDB" id="5961151at2759"/>
<dbReference type="Proteomes" id="UP000186698">
    <property type="component" value="Unplaced"/>
</dbReference>
<dbReference type="Bgee" id="399091">
    <property type="expression patterns" value="Expressed in camera-type eye and 9 other cell types or tissues"/>
</dbReference>
<dbReference type="GO" id="GO:0005737">
    <property type="term" value="C:cytoplasm"/>
    <property type="evidence" value="ECO:0000250"/>
    <property type="project" value="UniProtKB"/>
</dbReference>
<dbReference type="GO" id="GO:0005634">
    <property type="term" value="C:nucleus"/>
    <property type="evidence" value="ECO:0000250"/>
    <property type="project" value="UniProtKB"/>
</dbReference>
<dbReference type="GO" id="GO:0001654">
    <property type="term" value="P:eye development"/>
    <property type="evidence" value="ECO:0000250"/>
    <property type="project" value="UniProtKB"/>
</dbReference>
<dbReference type="FunFam" id="1.10.1410.40:FF:000002">
    <property type="entry name" value="protein mab-21-like 1"/>
    <property type="match status" value="1"/>
</dbReference>
<dbReference type="FunFam" id="3.30.460.90:FF:000001">
    <property type="entry name" value="protein mab-21-like 2"/>
    <property type="match status" value="1"/>
</dbReference>
<dbReference type="Gene3D" id="1.10.1410.40">
    <property type="match status" value="1"/>
</dbReference>
<dbReference type="Gene3D" id="3.30.460.90">
    <property type="match status" value="1"/>
</dbReference>
<dbReference type="InterPro" id="IPR046903">
    <property type="entry name" value="Mab-21-like_nuc_Trfase"/>
</dbReference>
<dbReference type="InterPro" id="IPR046906">
    <property type="entry name" value="Mab-21_HhH/H2TH-like"/>
</dbReference>
<dbReference type="InterPro" id="IPR024810">
    <property type="entry name" value="MAB21L/cGLR"/>
</dbReference>
<dbReference type="PANTHER" id="PTHR10656">
    <property type="entry name" value="CELL FATE DETERMINING PROTEIN MAB21-RELATED"/>
    <property type="match status" value="1"/>
</dbReference>
<dbReference type="PANTHER" id="PTHR10656:SF37">
    <property type="entry name" value="PROTEIN MAB-21-LIKE 2"/>
    <property type="match status" value="1"/>
</dbReference>
<dbReference type="Pfam" id="PF03281">
    <property type="entry name" value="Mab-21"/>
    <property type="match status" value="1"/>
</dbReference>
<dbReference type="Pfam" id="PF20266">
    <property type="entry name" value="Mab-21_C"/>
    <property type="match status" value="1"/>
</dbReference>
<dbReference type="SMART" id="SM01265">
    <property type="entry name" value="Mab-21"/>
    <property type="match status" value="1"/>
</dbReference>
<gene>
    <name type="primary">mab21l2-a</name>
    <name type="synonym">mab21l2</name>
</gene>
<proteinExistence type="evidence at transcript level"/>
<feature type="chain" id="PRO_0000312790" description="Protein mab-21-like 2-A">
    <location>
        <begin position="1"/>
        <end position="359"/>
    </location>
</feature>
<feature type="sequence conflict" description="In Ref. 2; AAC15657." evidence="5" ref="2">
    <original>G</original>
    <variation>A</variation>
    <location>
        <position position="96"/>
    </location>
</feature>
<feature type="sequence conflict" description="In Ref. 2; AAC15657." evidence="5" ref="2">
    <original>S</original>
    <variation>G</variation>
    <location>
        <position position="103"/>
    </location>
</feature>
<comment type="function">
    <text evidence="1 3 4">Required for normal development of the eye (By similarity). May promote dorsalization of the developing embryo by antagonizing the ventralizing factor bmp4. Functional antagonism of bmp4 may require interaction with smad1. Required for gastrulation and subsequent neural development. May function as a transcriptional repressor.</text>
</comment>
<comment type="subcellular location">
    <subcellularLocation>
        <location evidence="2">Nucleus</location>
    </subcellularLocation>
    <subcellularLocation>
        <location evidence="2">Cytoplasm</location>
    </subcellularLocation>
    <text evidence="2">Predominantly localizes to the nucleus, with some cytoplasmic localization.</text>
</comment>
<comment type="developmental stage">
    <text evidence="3 4">Expressed both maternally and zygotically, during and after gastrulation. Expressed in neurulating embryos at the neural tube, the optic tissue, the developing midbrain and the pharyngeal pouches. Expressed at the tailbud stage in the primitive eye field, the optic recess, the optic cup, the retina, the tectum, the dorsal neural tube and the branchial arches.</text>
</comment>
<comment type="similarity">
    <text evidence="5">Belongs to the mab-21 family.</text>
</comment>
<sequence length="359" mass="40830">MIAAQAKLVYQLNKYYSERCQARKGAIAKTIREVCKVVSDVLKEVEVQEPRFISSLTEIDARYEGLEVVCPTEFEVVLYLNQMGVFNFVDDGSLPGCAVLKLSDGRKRSMSLWVEFITASGYLSARKIRSRFQTLVAQAVDKCSYRDVVKMIADTSEVKLRIRERYIVQITPAFKCTGIWPRSAAQWPLPHIPWPGPNRVAEVKAEGFNLLSKECYSLTGKQSSAESDAWVLQFAEAENRLLLGGCRGKCLSVLKTLRDRHLELPGQPLNNYHMKTLLLYECEKHPRETDWDEACLGDRLNGILLQLISCLQCRRCPHYFLPNLDLFQGKPHSALESAAKQTWRLAREILTNPKSLDKL</sequence>
<keyword id="KW-0963">Cytoplasm</keyword>
<keyword id="KW-0217">Developmental protein</keyword>
<keyword id="KW-0539">Nucleus</keyword>
<keyword id="KW-1185">Reference proteome</keyword>
<keyword id="KW-0678">Repressor</keyword>
<keyword id="KW-0804">Transcription</keyword>
<keyword id="KW-0805">Transcription regulation</keyword>
<reference key="1">
    <citation type="journal article" date="2001" name="Biochem. Biophys. Res. Commun.">
        <title>Embryonic XMab21l2 expression is required for gastrulation and subsequent neural development.</title>
        <authorList>
            <person name="Lau G.T.C."/>
            <person name="Wong O.G.W."/>
            <person name="Chan P.M.Y."/>
            <person name="Kok K.-H."/>
            <person name="Wong R.L.Y."/>
            <person name="Chin K.-T."/>
            <person name="Lin M.C.M."/>
            <person name="Kung H.-F."/>
            <person name="Chow K.L."/>
        </authorList>
    </citation>
    <scope>NUCLEOTIDE SEQUENCE [GENOMIC DNA]</scope>
    <scope>FUNCTION</scope>
    <scope>DEVELOPMENTAL STAGE</scope>
</reference>
<reference key="2">
    <citation type="journal article" date="2004" name="BMC Cell Biol.">
        <title>MAB21L2, a vertebrate member of the Male-abnormal 21 family, modulates BMP signaling and interacts with SMAD1.</title>
        <authorList>
            <person name="Baldessari D."/>
            <person name="Badaloni A."/>
            <person name="Longhi R."/>
            <person name="Zappavigna V."/>
            <person name="Consalez G.G."/>
        </authorList>
    </citation>
    <scope>NUCLEOTIDE SEQUENCE [MRNA]</scope>
    <scope>FUNCTION</scope>
    <scope>DEVELOPMENTAL STAGE</scope>
    <source>
        <tissue>Head</tissue>
    </source>
</reference>
<reference key="3">
    <citation type="submission" date="2004-06" db="EMBL/GenBank/DDBJ databases">
        <authorList>
            <consortium name="NIH - Xenopus Gene Collection (XGC) project"/>
        </authorList>
    </citation>
    <scope>NUCLEOTIDE SEQUENCE [LARGE SCALE MRNA]</scope>
    <source>
        <tissue>Eye</tissue>
    </source>
</reference>
<organism>
    <name type="scientific">Xenopus laevis</name>
    <name type="common">African clawed frog</name>
    <dbReference type="NCBI Taxonomy" id="8355"/>
    <lineage>
        <taxon>Eukaryota</taxon>
        <taxon>Metazoa</taxon>
        <taxon>Chordata</taxon>
        <taxon>Craniata</taxon>
        <taxon>Vertebrata</taxon>
        <taxon>Euteleostomi</taxon>
        <taxon>Amphibia</taxon>
        <taxon>Batrachia</taxon>
        <taxon>Anura</taxon>
        <taxon>Pipoidea</taxon>
        <taxon>Pipidae</taxon>
        <taxon>Xenopodinae</taxon>
        <taxon>Xenopus</taxon>
        <taxon>Xenopus</taxon>
    </lineage>
</organism>
<evidence type="ECO:0000250" key="1">
    <source>
        <dbReference type="UniProtKB" id="Q8BPP1"/>
    </source>
</evidence>
<evidence type="ECO:0000250" key="2">
    <source>
        <dbReference type="UniProtKB" id="Q9Y586"/>
    </source>
</evidence>
<evidence type="ECO:0000269" key="3">
    <source>
    </source>
</evidence>
<evidence type="ECO:0000269" key="4">
    <source>
    </source>
</evidence>
<evidence type="ECO:0000305" key="5"/>